<organism>
    <name type="scientific">Rhizobium meliloti (strain 1021)</name>
    <name type="common">Ensifer meliloti</name>
    <name type="synonym">Sinorhizobium meliloti</name>
    <dbReference type="NCBI Taxonomy" id="266834"/>
    <lineage>
        <taxon>Bacteria</taxon>
        <taxon>Pseudomonadati</taxon>
        <taxon>Pseudomonadota</taxon>
        <taxon>Alphaproteobacteria</taxon>
        <taxon>Hyphomicrobiales</taxon>
        <taxon>Rhizobiaceae</taxon>
        <taxon>Sinorhizobium/Ensifer group</taxon>
        <taxon>Sinorhizobium</taxon>
    </lineage>
</organism>
<keyword id="KW-0520">NAD</keyword>
<keyword id="KW-0560">Oxidoreductase</keyword>
<keyword id="KW-1185">Reference proteome</keyword>
<evidence type="ECO:0000305" key="1"/>
<gene>
    <name type="primary">ordL</name>
    <name type="ordered locus">R00705</name>
    <name type="ORF">SMc00761</name>
</gene>
<accession>Q9Z3S3</accession>
<reference key="1">
    <citation type="journal article" date="2001" name="Proc. Natl. Acad. Sci. U.S.A.">
        <title>Analysis of the chromosome sequence of the legume symbiont Sinorhizobium meliloti strain 1021.</title>
        <authorList>
            <person name="Capela D."/>
            <person name="Barloy-Hubler F."/>
            <person name="Gouzy J."/>
            <person name="Bothe G."/>
            <person name="Ampe F."/>
            <person name="Batut J."/>
            <person name="Boistard P."/>
            <person name="Becker A."/>
            <person name="Boutry M."/>
            <person name="Cadieu E."/>
            <person name="Dreano S."/>
            <person name="Gloux S."/>
            <person name="Godrie T."/>
            <person name="Goffeau A."/>
            <person name="Kahn D."/>
            <person name="Kiss E."/>
            <person name="Lelaure V."/>
            <person name="Masuy D."/>
            <person name="Pohl T."/>
            <person name="Portetelle D."/>
            <person name="Puehler A."/>
            <person name="Purnelle B."/>
            <person name="Ramsperger U."/>
            <person name="Renard C."/>
            <person name="Thebault P."/>
            <person name="Vandenbol M."/>
            <person name="Weidner S."/>
            <person name="Galibert F."/>
        </authorList>
    </citation>
    <scope>NUCLEOTIDE SEQUENCE [LARGE SCALE GENOMIC DNA]</scope>
    <source>
        <strain>1021</strain>
    </source>
</reference>
<reference key="2">
    <citation type="journal article" date="2001" name="Science">
        <title>The composite genome of the legume symbiont Sinorhizobium meliloti.</title>
        <authorList>
            <person name="Galibert F."/>
            <person name="Finan T.M."/>
            <person name="Long S.R."/>
            <person name="Puehler A."/>
            <person name="Abola P."/>
            <person name="Ampe F."/>
            <person name="Barloy-Hubler F."/>
            <person name="Barnett M.J."/>
            <person name="Becker A."/>
            <person name="Boistard P."/>
            <person name="Bothe G."/>
            <person name="Boutry M."/>
            <person name="Bowser L."/>
            <person name="Buhrmester J."/>
            <person name="Cadieu E."/>
            <person name="Capela D."/>
            <person name="Chain P."/>
            <person name="Cowie A."/>
            <person name="Davis R.W."/>
            <person name="Dreano S."/>
            <person name="Federspiel N.A."/>
            <person name="Fisher R.F."/>
            <person name="Gloux S."/>
            <person name="Godrie T."/>
            <person name="Goffeau A."/>
            <person name="Golding B."/>
            <person name="Gouzy J."/>
            <person name="Gurjal M."/>
            <person name="Hernandez-Lucas I."/>
            <person name="Hong A."/>
            <person name="Huizar L."/>
            <person name="Hyman R.W."/>
            <person name="Jones T."/>
            <person name="Kahn D."/>
            <person name="Kahn M.L."/>
            <person name="Kalman S."/>
            <person name="Keating D.H."/>
            <person name="Kiss E."/>
            <person name="Komp C."/>
            <person name="Lelaure V."/>
            <person name="Masuy D."/>
            <person name="Palm C."/>
            <person name="Peck M.C."/>
            <person name="Pohl T.M."/>
            <person name="Portetelle D."/>
            <person name="Purnelle B."/>
            <person name="Ramsperger U."/>
            <person name="Surzycki R."/>
            <person name="Thebault P."/>
            <person name="Vandenbol M."/>
            <person name="Vorhoelter F.J."/>
            <person name="Weidner S."/>
            <person name="Wells D.H."/>
            <person name="Wong K."/>
            <person name="Yeh K.-C."/>
            <person name="Batut J."/>
        </authorList>
    </citation>
    <scope>NUCLEOTIDE SEQUENCE [LARGE SCALE GENOMIC DNA]</scope>
    <source>
        <strain>1021</strain>
    </source>
</reference>
<reference key="3">
    <citation type="journal article" date="1999" name="J. Bacteriol.">
        <title>A novel Sinorhizobium meliloti operon encodes an alpha-glucosidase and a periplasmic-binding-protein-dependent transport system for alpha-glucosides.</title>
        <authorList>
            <person name="Willis L.B."/>
            <person name="Walker G.C."/>
        </authorList>
    </citation>
    <scope>NUCLEOTIDE SEQUENCE [GENOMIC DNA] OF 124-428</scope>
</reference>
<protein>
    <recommendedName>
        <fullName>Probable oxidoreductase OrdL</fullName>
        <ecNumber>1.-.-.-</ecNumber>
    </recommendedName>
</protein>
<proteinExistence type="predicted"/>
<dbReference type="EC" id="1.-.-.-"/>
<dbReference type="EMBL" id="AL591688">
    <property type="protein sequence ID" value="CAC45277.1"/>
    <property type="molecule type" value="Genomic_DNA"/>
</dbReference>
<dbReference type="EMBL" id="AF045609">
    <property type="protein sequence ID" value="AAD12042.1"/>
    <property type="molecule type" value="Genomic_DNA"/>
</dbReference>
<dbReference type="RefSeq" id="NP_384811.1">
    <property type="nucleotide sequence ID" value="NC_003047.1"/>
</dbReference>
<dbReference type="RefSeq" id="WP_010968759.1">
    <property type="nucleotide sequence ID" value="NC_003047.1"/>
</dbReference>
<dbReference type="SMR" id="Q9Z3S3"/>
<dbReference type="EnsemblBacteria" id="CAC45277">
    <property type="protein sequence ID" value="CAC45277"/>
    <property type="gene ID" value="SMc00761"/>
</dbReference>
<dbReference type="KEGG" id="sme:SMc00761"/>
<dbReference type="PATRIC" id="fig|266834.11.peg.2082"/>
<dbReference type="eggNOG" id="COG0665">
    <property type="taxonomic scope" value="Bacteria"/>
</dbReference>
<dbReference type="HOGENOM" id="CLU_007884_3_0_5"/>
<dbReference type="OrthoDB" id="9806601at2"/>
<dbReference type="Proteomes" id="UP000001976">
    <property type="component" value="Chromosome"/>
</dbReference>
<dbReference type="GO" id="GO:0005737">
    <property type="term" value="C:cytoplasm"/>
    <property type="evidence" value="ECO:0007669"/>
    <property type="project" value="TreeGrafter"/>
</dbReference>
<dbReference type="GO" id="GO:0016491">
    <property type="term" value="F:oxidoreductase activity"/>
    <property type="evidence" value="ECO:0007669"/>
    <property type="project" value="UniProtKB-KW"/>
</dbReference>
<dbReference type="Gene3D" id="3.30.9.10">
    <property type="entry name" value="D-Amino Acid Oxidase, subunit A, domain 2"/>
    <property type="match status" value="1"/>
</dbReference>
<dbReference type="Gene3D" id="3.50.50.60">
    <property type="entry name" value="FAD/NAD(P)-binding domain"/>
    <property type="match status" value="1"/>
</dbReference>
<dbReference type="InterPro" id="IPR006076">
    <property type="entry name" value="FAD-dep_OxRdtase"/>
</dbReference>
<dbReference type="InterPro" id="IPR036188">
    <property type="entry name" value="FAD/NAD-bd_sf"/>
</dbReference>
<dbReference type="PANTHER" id="PTHR13847:SF281">
    <property type="entry name" value="FAD DEPENDENT OXIDOREDUCTASE DOMAIN-CONTAINING PROTEIN"/>
    <property type="match status" value="1"/>
</dbReference>
<dbReference type="PANTHER" id="PTHR13847">
    <property type="entry name" value="SARCOSINE DEHYDROGENASE-RELATED"/>
    <property type="match status" value="1"/>
</dbReference>
<dbReference type="Pfam" id="PF01266">
    <property type="entry name" value="DAO"/>
    <property type="match status" value="1"/>
</dbReference>
<dbReference type="SUPFAM" id="SSF51905">
    <property type="entry name" value="FAD/NAD(P)-binding domain"/>
    <property type="match status" value="1"/>
</dbReference>
<sequence length="428" mass="46848">MTWQSPISPGYSWYEATIPERPVFPIMPGSRKADVAIIGGGYTGLQAACNLARSGTDVTLIDACRFGDGASGRNGGQFGTGQRVWADETEEVLGREWAQRLFDMAENAKRYVLGFAEEHAIDIEFMPGQLSVGHKASLERDYRNHVEAMTGRYGYPHLSFMDREETVSRLGSSHYHFGIRDTGTGHIHPMKLVVGLARQAALAGANLYEGTKALKIEKKGGAVVIETTSGTITADRALIACNGYIGNLEPVTASHVMPIRSFIGATTVLHGHPEILPGGESVDDSRFVVRYFRKSKDGRLLFGGREAYTADNPRDISAHIRRQICEIYPDLADVEITHAWGGSVGITMPRQPFCREVMPGVTTIGGYSGHGVMLANYCGKLYAELALGKSTELDLLKQLKIPAFPGGTRFRSALLFLALSWYALRDRF</sequence>
<feature type="chain" id="PRO_0000058079" description="Probable oxidoreductase OrdL">
    <location>
        <begin position="1"/>
        <end position="428"/>
    </location>
</feature>
<feature type="sequence conflict" description="In Ref. 3; AAD12042." evidence="1" ref="3">
    <original>G</original>
    <variation>A</variation>
    <location>
        <position position="303"/>
    </location>
</feature>
<name>ORDL_RHIME</name>